<dbReference type="EMBL" id="CP000140">
    <property type="protein sequence ID" value="ABR44284.1"/>
    <property type="status" value="ALT_INIT"/>
    <property type="molecule type" value="Genomic_DNA"/>
</dbReference>
<dbReference type="RefSeq" id="WP_008773876.1">
    <property type="nucleotide sequence ID" value="NZ_LR215978.1"/>
</dbReference>
<dbReference type="SMR" id="A6LF20"/>
<dbReference type="STRING" id="435591.BDI_2565"/>
<dbReference type="PaxDb" id="435591-BDI_2565"/>
<dbReference type="KEGG" id="pdi:BDI_2565"/>
<dbReference type="eggNOG" id="COG0792">
    <property type="taxonomic scope" value="Bacteria"/>
</dbReference>
<dbReference type="HOGENOM" id="CLU_115353_2_1_10"/>
<dbReference type="Proteomes" id="UP000000566">
    <property type="component" value="Chromosome"/>
</dbReference>
<dbReference type="GO" id="GO:0003676">
    <property type="term" value="F:nucleic acid binding"/>
    <property type="evidence" value="ECO:0007669"/>
    <property type="project" value="InterPro"/>
</dbReference>
<dbReference type="CDD" id="cd20736">
    <property type="entry name" value="PoNe_Nuclease"/>
    <property type="match status" value="1"/>
</dbReference>
<dbReference type="Gene3D" id="3.40.1350.10">
    <property type="match status" value="1"/>
</dbReference>
<dbReference type="HAMAP" id="MF_00048">
    <property type="entry name" value="UPF0102"/>
    <property type="match status" value="1"/>
</dbReference>
<dbReference type="InterPro" id="IPR011335">
    <property type="entry name" value="Restrct_endonuc-II-like"/>
</dbReference>
<dbReference type="InterPro" id="IPR011856">
    <property type="entry name" value="tRNA_endonuc-like_dom_sf"/>
</dbReference>
<dbReference type="InterPro" id="IPR003509">
    <property type="entry name" value="UPF0102_YraN-like"/>
</dbReference>
<dbReference type="PANTHER" id="PTHR34039">
    <property type="entry name" value="UPF0102 PROTEIN YRAN"/>
    <property type="match status" value="1"/>
</dbReference>
<dbReference type="PANTHER" id="PTHR34039:SF1">
    <property type="entry name" value="UPF0102 PROTEIN YRAN"/>
    <property type="match status" value="1"/>
</dbReference>
<dbReference type="Pfam" id="PF02021">
    <property type="entry name" value="UPF0102"/>
    <property type="match status" value="1"/>
</dbReference>
<dbReference type="SUPFAM" id="SSF52980">
    <property type="entry name" value="Restriction endonuclease-like"/>
    <property type="match status" value="1"/>
</dbReference>
<reference key="1">
    <citation type="journal article" date="2007" name="PLoS Biol.">
        <title>Evolution of symbiotic bacteria in the distal human intestine.</title>
        <authorList>
            <person name="Xu J."/>
            <person name="Mahowald M.A."/>
            <person name="Ley R.E."/>
            <person name="Lozupone C.A."/>
            <person name="Hamady M."/>
            <person name="Martens E.C."/>
            <person name="Henrissat B."/>
            <person name="Coutinho P.M."/>
            <person name="Minx P."/>
            <person name="Latreille P."/>
            <person name="Cordum H."/>
            <person name="Van Brunt A."/>
            <person name="Kim K."/>
            <person name="Fulton R.S."/>
            <person name="Fulton L.A."/>
            <person name="Clifton S.W."/>
            <person name="Wilson R.K."/>
            <person name="Knight R.D."/>
            <person name="Gordon J.I."/>
        </authorList>
    </citation>
    <scope>NUCLEOTIDE SEQUENCE [LARGE SCALE GENOMIC DNA]</scope>
    <source>
        <strain>ATCC 8503 / DSM 20701 / CIP 104284 / JCM 5825 / NCTC 11152</strain>
    </source>
</reference>
<evidence type="ECO:0000255" key="1">
    <source>
        <dbReference type="HAMAP-Rule" id="MF_00048"/>
    </source>
</evidence>
<evidence type="ECO:0000305" key="2"/>
<keyword id="KW-1185">Reference proteome</keyword>
<organism>
    <name type="scientific">Parabacteroides distasonis (strain ATCC 8503 / DSM 20701 / CIP 104284 / JCM 5825 / NCTC 11152)</name>
    <dbReference type="NCBI Taxonomy" id="435591"/>
    <lineage>
        <taxon>Bacteria</taxon>
        <taxon>Pseudomonadati</taxon>
        <taxon>Bacteroidota</taxon>
        <taxon>Bacteroidia</taxon>
        <taxon>Bacteroidales</taxon>
        <taxon>Tannerellaceae</taxon>
        <taxon>Parabacteroides</taxon>
    </lineage>
</organism>
<protein>
    <recommendedName>
        <fullName evidence="1">UPF0102 protein BDI_2565</fullName>
    </recommendedName>
</protein>
<name>Y2565_PARD8</name>
<accession>A6LF20</accession>
<gene>
    <name type="ordered locus">BDI_2565</name>
</gene>
<proteinExistence type="inferred from homology"/>
<feature type="chain" id="PRO_0000336217" description="UPF0102 protein BDI_2565">
    <location>
        <begin position="1"/>
        <end position="121"/>
    </location>
</feature>
<sequence length="121" mass="14176">MARQNDMGREGESEARAYLVKHGYNVLHTNWHWHHYELDIIAVKEDELIVVEVKTRSEDFLLSPEDAVDTKKIRRIVAAADAYVRYFNIDLPVRFDIVTLIKKETGFLIDHIEDAFYAPCR</sequence>
<comment type="similarity">
    <text evidence="1">Belongs to the UPF0102 family.</text>
</comment>
<comment type="sequence caution" evidence="2">
    <conflict type="erroneous initiation">
        <sequence resource="EMBL-CDS" id="ABR44284"/>
    </conflict>
</comment>